<feature type="chain" id="PRO_1000197032" description="tRNA (guanine(26)-N(2))-dimethyltransferase">
    <location>
        <begin position="1"/>
        <end position="382"/>
    </location>
</feature>
<feature type="domain" description="Trm1 methyltransferase" evidence="1">
    <location>
        <begin position="4"/>
        <end position="370"/>
    </location>
</feature>
<feature type="binding site" evidence="1">
    <location>
        <position position="44"/>
    </location>
    <ligand>
        <name>S-adenosyl-L-methionine</name>
        <dbReference type="ChEBI" id="CHEBI:59789"/>
    </ligand>
</feature>
<feature type="binding site" evidence="1">
    <location>
        <position position="69"/>
    </location>
    <ligand>
        <name>S-adenosyl-L-methionine</name>
        <dbReference type="ChEBI" id="CHEBI:59789"/>
    </ligand>
</feature>
<feature type="binding site" evidence="1">
    <location>
        <position position="87"/>
    </location>
    <ligand>
        <name>S-adenosyl-L-methionine</name>
        <dbReference type="ChEBI" id="CHEBI:59789"/>
    </ligand>
</feature>
<feature type="binding site" evidence="1">
    <location>
        <position position="113"/>
    </location>
    <ligand>
        <name>S-adenosyl-L-methionine</name>
        <dbReference type="ChEBI" id="CHEBI:59789"/>
    </ligand>
</feature>
<feature type="binding site" evidence="1">
    <location>
        <position position="114"/>
    </location>
    <ligand>
        <name>S-adenosyl-L-methionine</name>
        <dbReference type="ChEBI" id="CHEBI:59789"/>
    </ligand>
</feature>
<feature type="binding site" evidence="1">
    <location>
        <position position="244"/>
    </location>
    <ligand>
        <name>Zn(2+)</name>
        <dbReference type="ChEBI" id="CHEBI:29105"/>
    </ligand>
</feature>
<feature type="binding site" evidence="1">
    <location>
        <position position="247"/>
    </location>
    <ligand>
        <name>Zn(2+)</name>
        <dbReference type="ChEBI" id="CHEBI:29105"/>
    </ligand>
</feature>
<feature type="binding site" evidence="1">
    <location>
        <position position="261"/>
    </location>
    <ligand>
        <name>Zn(2+)</name>
        <dbReference type="ChEBI" id="CHEBI:29105"/>
    </ligand>
</feature>
<feature type="binding site" evidence="1">
    <location>
        <position position="264"/>
    </location>
    <ligand>
        <name>Zn(2+)</name>
        <dbReference type="ChEBI" id="CHEBI:29105"/>
    </ligand>
</feature>
<accession>A4YHH9</accession>
<dbReference type="EC" id="2.1.1.216" evidence="1"/>
<dbReference type="EMBL" id="CP000682">
    <property type="protein sequence ID" value="ABP95881.1"/>
    <property type="molecule type" value="Genomic_DNA"/>
</dbReference>
<dbReference type="RefSeq" id="WP_012021668.1">
    <property type="nucleotide sequence ID" value="NC_009440.1"/>
</dbReference>
<dbReference type="SMR" id="A4YHH9"/>
<dbReference type="STRING" id="399549.Msed_1726"/>
<dbReference type="GeneID" id="91756238"/>
<dbReference type="KEGG" id="mse:Msed_1726"/>
<dbReference type="eggNOG" id="arCOG01219">
    <property type="taxonomic scope" value="Archaea"/>
</dbReference>
<dbReference type="HOGENOM" id="CLU_010862_5_1_2"/>
<dbReference type="Proteomes" id="UP000000242">
    <property type="component" value="Chromosome"/>
</dbReference>
<dbReference type="GO" id="GO:0160104">
    <property type="term" value="F:tRNA (guanine(26)-N2)-dimethyltransferase activity"/>
    <property type="evidence" value="ECO:0007669"/>
    <property type="project" value="UniProtKB-UniRule"/>
</dbReference>
<dbReference type="GO" id="GO:0000049">
    <property type="term" value="F:tRNA binding"/>
    <property type="evidence" value="ECO:0007669"/>
    <property type="project" value="UniProtKB-KW"/>
</dbReference>
<dbReference type="GO" id="GO:0002940">
    <property type="term" value="P:tRNA N2-guanine methylation"/>
    <property type="evidence" value="ECO:0007669"/>
    <property type="project" value="TreeGrafter"/>
</dbReference>
<dbReference type="FunFam" id="3.40.50.150:FF:000272">
    <property type="entry name" value="tRNA (guanine(26)-N(2))-dimethyltransferase"/>
    <property type="match status" value="1"/>
</dbReference>
<dbReference type="Gene3D" id="3.30.56.70">
    <property type="entry name" value="N2,N2-dimethylguanosine tRNA methyltransferase, C-terminal domain"/>
    <property type="match status" value="1"/>
</dbReference>
<dbReference type="Gene3D" id="3.40.50.150">
    <property type="entry name" value="Vaccinia Virus protein VP39"/>
    <property type="match status" value="1"/>
</dbReference>
<dbReference type="HAMAP" id="MF_00290">
    <property type="entry name" value="tRNA_dimethyltr_TRM1"/>
    <property type="match status" value="1"/>
</dbReference>
<dbReference type="InterPro" id="IPR029063">
    <property type="entry name" value="SAM-dependent_MTases_sf"/>
</dbReference>
<dbReference type="InterPro" id="IPR002905">
    <property type="entry name" value="Trm1"/>
</dbReference>
<dbReference type="InterPro" id="IPR022923">
    <property type="entry name" value="TRM1_arc_bac"/>
</dbReference>
<dbReference type="InterPro" id="IPR042296">
    <property type="entry name" value="tRNA_met_Trm1_C"/>
</dbReference>
<dbReference type="NCBIfam" id="NF003331">
    <property type="entry name" value="PRK04338.1-7"/>
    <property type="match status" value="1"/>
</dbReference>
<dbReference type="PANTHER" id="PTHR10631">
    <property type="entry name" value="N 2 ,N 2 -DIMETHYLGUANOSINE TRNA METHYLTRANSFERASE"/>
    <property type="match status" value="1"/>
</dbReference>
<dbReference type="PANTHER" id="PTHR10631:SF3">
    <property type="entry name" value="TRNA (GUANINE(26)-N(2))-DIMETHYLTRANSFERASE"/>
    <property type="match status" value="1"/>
</dbReference>
<dbReference type="Pfam" id="PF02005">
    <property type="entry name" value="TRM"/>
    <property type="match status" value="1"/>
</dbReference>
<dbReference type="SUPFAM" id="SSF53335">
    <property type="entry name" value="S-adenosyl-L-methionine-dependent methyltransferases"/>
    <property type="match status" value="1"/>
</dbReference>
<dbReference type="PROSITE" id="PS51626">
    <property type="entry name" value="SAM_MT_TRM1"/>
    <property type="match status" value="1"/>
</dbReference>
<proteinExistence type="inferred from homology"/>
<evidence type="ECO:0000255" key="1">
    <source>
        <dbReference type="HAMAP-Rule" id="MF_00290"/>
    </source>
</evidence>
<gene>
    <name evidence="1" type="primary">trm1</name>
    <name type="ordered locus">Msed_1726</name>
</gene>
<name>TRM1_METS5</name>
<organism>
    <name type="scientific">Metallosphaera sedula (strain ATCC 51363 / DSM 5348 / JCM 9185 / NBRC 15509 / TH2)</name>
    <dbReference type="NCBI Taxonomy" id="399549"/>
    <lineage>
        <taxon>Archaea</taxon>
        <taxon>Thermoproteota</taxon>
        <taxon>Thermoprotei</taxon>
        <taxon>Sulfolobales</taxon>
        <taxon>Sulfolobaceae</taxon>
        <taxon>Metallosphaera</taxon>
    </lineage>
</organism>
<protein>
    <recommendedName>
        <fullName evidence="1">tRNA (guanine(26)-N(2))-dimethyltransferase</fullName>
        <ecNumber evidence="1">2.1.1.216</ecNumber>
    </recommendedName>
    <alternativeName>
        <fullName evidence="1">tRNA 2,2-dimethylguanosine-26 methyltransferase</fullName>
    </alternativeName>
    <alternativeName>
        <fullName evidence="1">tRNA(guanine-26,N(2)-N(2)) methyltransferase</fullName>
    </alternativeName>
    <alternativeName>
        <fullName evidence="1">tRNA(m(2,2)G26)dimethyltransferase</fullName>
    </alternativeName>
</protein>
<sequence>MKLTEVIEGKARLVIPDPSEFSREGKFDPAWSPVFYNPRMVFNRDVSVLAVSVISPPSVLDAMSATGVRGIRYVKESGVKGEVLFNDKNPVSVELISKNLELNGITGKVLRSDANSLMHQVKVGYTDLDPFGSPAPYLFSAISSLRRKGVLGVTATDLSALEGKSRTSSKRKYGVQGSRLSYSKEAGLRVLLGKIVKEASVQEKGIRPLMGFYHDYYYRLFVKMEDGAKRADRSLESLGTLYECDRCGYSFMSSDECERKCPVCGGELKYYGPAWIGEFNDLEFLKEMKNRLTEFSYLSNSVKISELLEYLERENRFGPYYRVDVLASRLKVNMPPMNSLLGCLGDAVRTHFDPRGFKSFREFSEILECVKGSSATYETSGR</sequence>
<comment type="function">
    <text evidence="1">Dimethylates a single guanine residue at position 26 of a number of tRNAs using S-adenosyl-L-methionine as donor of the methyl groups.</text>
</comment>
<comment type="catalytic activity">
    <reaction evidence="1">
        <text>guanosine(26) in tRNA + 2 S-adenosyl-L-methionine = N(2)-dimethylguanosine(26) in tRNA + 2 S-adenosyl-L-homocysteine + 2 H(+)</text>
        <dbReference type="Rhea" id="RHEA:43140"/>
        <dbReference type="Rhea" id="RHEA-COMP:10359"/>
        <dbReference type="Rhea" id="RHEA-COMP:10360"/>
        <dbReference type="ChEBI" id="CHEBI:15378"/>
        <dbReference type="ChEBI" id="CHEBI:57856"/>
        <dbReference type="ChEBI" id="CHEBI:59789"/>
        <dbReference type="ChEBI" id="CHEBI:74269"/>
        <dbReference type="ChEBI" id="CHEBI:74513"/>
        <dbReference type="EC" id="2.1.1.216"/>
    </reaction>
</comment>
<comment type="similarity">
    <text evidence="1">Belongs to the class I-like SAM-binding methyltransferase superfamily. Trm1 family.</text>
</comment>
<reference key="1">
    <citation type="journal article" date="2008" name="Appl. Environ. Microbiol.">
        <title>The genome sequence of the metal-mobilizing, extremely thermoacidophilic archaeon Metallosphaera sedula provides insights into bioleaching-associated metabolism.</title>
        <authorList>
            <person name="Auernik K.S."/>
            <person name="Maezato Y."/>
            <person name="Blum P.H."/>
            <person name="Kelly R.M."/>
        </authorList>
    </citation>
    <scope>NUCLEOTIDE SEQUENCE [LARGE SCALE GENOMIC DNA]</scope>
    <source>
        <strain>ATCC 51363 / DSM 5348 / JCM 9185 / NBRC 15509 / TH2</strain>
    </source>
</reference>
<keyword id="KW-0479">Metal-binding</keyword>
<keyword id="KW-0489">Methyltransferase</keyword>
<keyword id="KW-1185">Reference proteome</keyword>
<keyword id="KW-0694">RNA-binding</keyword>
<keyword id="KW-0949">S-adenosyl-L-methionine</keyword>
<keyword id="KW-0808">Transferase</keyword>
<keyword id="KW-0819">tRNA processing</keyword>
<keyword id="KW-0820">tRNA-binding</keyword>
<keyword id="KW-0862">Zinc</keyword>